<feature type="chain" id="PRO_0000089847" description="CLIP-associating protein 1">
    <location>
        <begin position="1"/>
        <end position="1538"/>
    </location>
</feature>
<feature type="repeat" description="HEAT 1">
    <location>
        <begin position="87"/>
        <end position="124"/>
    </location>
</feature>
<feature type="repeat" description="HEAT 2">
    <location>
        <begin position="163"/>
        <end position="200"/>
    </location>
</feature>
<feature type="repeat" description="HEAT 3">
    <location>
        <begin position="405"/>
        <end position="440"/>
    </location>
</feature>
<feature type="repeat" description="HEAT 4">
    <location>
        <begin position="441"/>
        <end position="477"/>
    </location>
</feature>
<feature type="repeat" description="HEAT 5">
    <location>
        <begin position="974"/>
        <end position="1011"/>
    </location>
</feature>
<feature type="repeat" description="HEAT 6">
    <location>
        <begin position="1342"/>
        <end position="1379"/>
    </location>
</feature>
<feature type="repeat" description="HEAT 7">
    <location>
        <begin position="1460"/>
        <end position="1497"/>
    </location>
</feature>
<feature type="region of interest" description="Disordered" evidence="4">
    <location>
        <begin position="235"/>
        <end position="292"/>
    </location>
</feature>
<feature type="region of interest" description="Disordered" evidence="4">
    <location>
        <begin position="543"/>
        <end position="783"/>
    </location>
</feature>
<feature type="region of interest" description="Interaction with microtubules, MAPRE1 and MAPRE3" evidence="8">
    <location>
        <begin position="662"/>
        <end position="785"/>
    </location>
</feature>
<feature type="region of interest" description="Disordered" evidence="4">
    <location>
        <begin position="1080"/>
        <end position="1120"/>
    </location>
</feature>
<feature type="region of interest" description="Disordered" evidence="4">
    <location>
        <begin position="1136"/>
        <end position="1156"/>
    </location>
</feature>
<feature type="region of interest" description="Disordered" evidence="4">
    <location>
        <begin position="1215"/>
        <end position="1238"/>
    </location>
</feature>
<feature type="region of interest" description="Interaction with CLIP2" evidence="1">
    <location>
        <begin position="1254"/>
        <end position="1538"/>
    </location>
</feature>
<feature type="region of interest" description="Interaction with PHLDB2 and RSN" evidence="10">
    <location>
        <begin position="1254"/>
        <end position="1538"/>
    </location>
</feature>
<feature type="region of interest" description="Localization to kinetochores">
    <location>
        <begin position="1256"/>
        <end position="1538"/>
    </location>
</feature>
<feature type="coiled-coil region" evidence="3">
    <location>
        <begin position="1299"/>
        <end position="1330"/>
    </location>
</feature>
<feature type="compositionally biased region" description="Low complexity" evidence="4">
    <location>
        <begin position="251"/>
        <end position="268"/>
    </location>
</feature>
<feature type="compositionally biased region" description="Low complexity" evidence="4">
    <location>
        <begin position="548"/>
        <end position="567"/>
    </location>
</feature>
<feature type="compositionally biased region" description="Low complexity" evidence="4">
    <location>
        <begin position="574"/>
        <end position="594"/>
    </location>
</feature>
<feature type="compositionally biased region" description="Low complexity" evidence="4">
    <location>
        <begin position="606"/>
        <end position="628"/>
    </location>
</feature>
<feature type="compositionally biased region" description="Polar residues" evidence="4">
    <location>
        <begin position="645"/>
        <end position="658"/>
    </location>
</feature>
<feature type="compositionally biased region" description="Low complexity" evidence="4">
    <location>
        <begin position="673"/>
        <end position="692"/>
    </location>
</feature>
<feature type="compositionally biased region" description="Gly residues" evidence="4">
    <location>
        <begin position="693"/>
        <end position="705"/>
    </location>
</feature>
<feature type="compositionally biased region" description="Polar residues" evidence="4">
    <location>
        <begin position="724"/>
        <end position="733"/>
    </location>
</feature>
<feature type="compositionally biased region" description="Polar residues" evidence="4">
    <location>
        <begin position="1082"/>
        <end position="1097"/>
    </location>
</feature>
<feature type="compositionally biased region" description="Low complexity" evidence="4">
    <location>
        <begin position="1106"/>
        <end position="1115"/>
    </location>
</feature>
<feature type="modified residue" description="Phosphoserine" evidence="23">
    <location>
        <position position="246"/>
    </location>
</feature>
<feature type="modified residue" description="Phosphoserine" evidence="23">
    <location>
        <position position="545"/>
    </location>
</feature>
<feature type="modified residue" description="Phosphoserine" evidence="2">
    <location>
        <position position="548"/>
    </location>
</feature>
<feature type="modified residue" description="Phosphoserine" evidence="23">
    <location>
        <position position="558"/>
    </location>
</feature>
<feature type="modified residue" description="Phosphoserine" evidence="23">
    <location>
        <position position="559"/>
    </location>
</feature>
<feature type="modified residue" description="Phosphoserine" evidence="23">
    <location>
        <position position="568"/>
    </location>
</feature>
<feature type="modified residue" description="Phosphoserine" evidence="19 20 22 23">
    <location>
        <position position="600"/>
    </location>
</feature>
<feature type="modified residue" description="Phosphoserine" evidence="23">
    <location>
        <position position="636"/>
    </location>
</feature>
<feature type="modified residue" description="Phosphoserine" evidence="19 20 21 22 23">
    <location>
        <position position="646"/>
    </location>
</feature>
<feature type="modified residue" description="Phosphoserine" evidence="23">
    <location>
        <position position="647"/>
    </location>
</feature>
<feature type="modified residue" description="Phosphoserine" evidence="19 23">
    <location>
        <position position="649"/>
    </location>
</feature>
<feature type="modified residue" description="Phosphothreonine" evidence="19">
    <location>
        <position position="656"/>
    </location>
</feature>
<feature type="modified residue" description="Phosphoserine" evidence="22">
    <location>
        <position position="684"/>
    </location>
</feature>
<feature type="modified residue" description="Phosphoserine" evidence="19 20">
    <location>
        <position position="688"/>
    </location>
</feature>
<feature type="modified residue" description="Phosphoserine" evidence="19 23">
    <location>
        <position position="695"/>
    </location>
</feature>
<feature type="modified residue" description="Phosphoserine" evidence="23">
    <location>
        <position position="705"/>
    </location>
</feature>
<feature type="modified residue" description="Phosphothreonine" evidence="19">
    <location>
        <position position="711"/>
    </location>
</feature>
<feature type="modified residue" description="Phosphoserine" evidence="19">
    <location>
        <position position="714"/>
    </location>
</feature>
<feature type="modified residue" description="Phosphoserine" evidence="23">
    <location>
        <position position="787"/>
    </location>
</feature>
<feature type="modified residue" description="Phosphoserine" evidence="20 23">
    <location>
        <position position="797"/>
    </location>
</feature>
<feature type="modified residue" description="Phosphoserine" evidence="23">
    <location>
        <position position="823"/>
    </location>
</feature>
<feature type="modified residue" description="Phosphoserine" evidence="19 20 23">
    <location>
        <position position="1091"/>
    </location>
</feature>
<feature type="modified residue" description="Phosphothreonine" evidence="2">
    <location>
        <position position="1095"/>
    </location>
</feature>
<feature type="modified residue" description="Phosphothreonine" evidence="19">
    <location>
        <position position="1099"/>
    </location>
</feature>
<feature type="modified residue" description="Phosphoserine" evidence="2">
    <location>
        <position position="1113"/>
    </location>
</feature>
<feature type="modified residue" description="Phosphoserine" evidence="18 23">
    <location>
        <position position="1196"/>
    </location>
</feature>
<feature type="modified residue" description="Phosphoserine" evidence="21">
    <location>
        <position position="1223"/>
    </location>
</feature>
<feature type="splice variant" id="VSP_054412" description="In isoform 4." evidence="15">
    <original>L</original>
    <variation>LESRHMREDMEYIGLDS</variation>
    <location>
        <position position="637"/>
    </location>
</feature>
<feature type="splice variant" id="VSP_057272" description="In isoform 5." evidence="15">
    <original>L</original>
    <variation>LDGTTTKAE</variation>
    <location>
        <position position="637"/>
    </location>
</feature>
<feature type="splice variant" id="VSP_054413" description="In isoform 4." evidence="15">
    <original>RSRSANPAGA</original>
    <variation>P</variation>
    <location>
        <begin position="673"/>
        <end position="682"/>
    </location>
</feature>
<feature type="splice variant" id="VSP_022386" description="In isoform 2, isoform 3, isoform 4 and isoform 5." evidence="15 16">
    <location>
        <begin position="737"/>
        <end position="772"/>
    </location>
</feature>
<feature type="splice variant" id="VSP_022387" description="In isoform 2, isoform 3 and isoform 5." evidence="15 16">
    <original>L</original>
    <variation>LLLGDSRSK</variation>
    <location>
        <position position="808"/>
    </location>
</feature>
<feature type="splice variant" id="VSP_054414" description="In isoform 4." evidence="15">
    <original>L</original>
    <variation>LLLGDSRS</variation>
    <location>
        <position position="808"/>
    </location>
</feature>
<feature type="splice variant" id="VSP_022388" description="In isoform 3." evidence="16">
    <original>K</original>
    <variation>KIADSEAECEDKEGNLFPSEVSCT</variation>
    <location>
        <position position="911"/>
    </location>
</feature>
<feature type="splice variant" id="VSP_022389" description="In isoform 2, isoform 3, isoform 4 and isoform 5." evidence="15 16">
    <location>
        <begin position="1123"/>
        <end position="1161"/>
    </location>
</feature>
<feature type="sequence variant" id="VAR_053818" description="In dbSNP:rs17761055.">
    <original>I</original>
    <variation>T</variation>
    <location>
        <position position="233"/>
    </location>
</feature>
<feature type="sequence conflict" description="In Ref. 5; CAI46251." evidence="17" ref="5">
    <original>R</original>
    <variation>G</variation>
    <location>
        <position position="251"/>
    </location>
</feature>
<feature type="sequence conflict" description="In Ref. 5; CAI46251." evidence="17" ref="5">
    <original>S</original>
    <variation>F</variation>
    <location>
        <position position="556"/>
    </location>
</feature>
<feature type="helix" evidence="24">
    <location>
        <begin position="5"/>
        <end position="13"/>
    </location>
</feature>
<feature type="helix" evidence="24">
    <location>
        <begin position="17"/>
        <end position="32"/>
    </location>
</feature>
<feature type="turn" evidence="24">
    <location>
        <begin position="34"/>
        <end position="42"/>
    </location>
</feature>
<feature type="helix" evidence="24">
    <location>
        <begin position="44"/>
        <end position="56"/>
    </location>
</feature>
<feature type="turn" evidence="24">
    <location>
        <begin position="57"/>
        <end position="60"/>
    </location>
</feature>
<feature type="helix" evidence="24">
    <location>
        <begin position="64"/>
        <end position="81"/>
    </location>
</feature>
<feature type="helix" evidence="24">
    <location>
        <begin position="82"/>
        <end position="85"/>
    </location>
</feature>
<feature type="helix" evidence="24">
    <location>
        <begin position="86"/>
        <end position="99"/>
    </location>
</feature>
<feature type="helix" evidence="24">
    <location>
        <begin position="105"/>
        <end position="121"/>
    </location>
</feature>
<feature type="helix" evidence="24">
    <location>
        <begin position="125"/>
        <end position="130"/>
    </location>
</feature>
<feature type="helix" evidence="24">
    <location>
        <begin position="133"/>
        <end position="137"/>
    </location>
</feature>
<feature type="strand" evidence="24">
    <location>
        <begin position="138"/>
        <end position="140"/>
    </location>
</feature>
<feature type="helix" evidence="24">
    <location>
        <begin position="141"/>
        <end position="158"/>
    </location>
</feature>
<feature type="helix" evidence="24">
    <location>
        <begin position="160"/>
        <end position="162"/>
    </location>
</feature>
<feature type="helix" evidence="24">
    <location>
        <begin position="165"/>
        <end position="176"/>
    </location>
</feature>
<feature type="helix" evidence="24">
    <location>
        <begin position="181"/>
        <end position="198"/>
    </location>
</feature>
<feature type="helix" evidence="24">
    <location>
        <begin position="200"/>
        <end position="207"/>
    </location>
</feature>
<feature type="helix" evidence="24">
    <location>
        <begin position="213"/>
        <end position="228"/>
    </location>
</feature>
<feature type="helix" evidence="25">
    <location>
        <begin position="296"/>
        <end position="305"/>
    </location>
</feature>
<feature type="helix" evidence="25">
    <location>
        <begin position="317"/>
        <end position="331"/>
    </location>
</feature>
<feature type="helix" evidence="25">
    <location>
        <begin position="338"/>
        <end position="353"/>
    </location>
</feature>
<feature type="helix" evidence="25">
    <location>
        <begin position="356"/>
        <end position="358"/>
    </location>
</feature>
<feature type="helix" evidence="25">
    <location>
        <begin position="362"/>
        <end position="367"/>
    </location>
</feature>
<feature type="helix" evidence="25">
    <location>
        <begin position="370"/>
        <end position="377"/>
    </location>
</feature>
<feature type="helix" evidence="25">
    <location>
        <begin position="382"/>
        <end position="399"/>
    </location>
</feature>
<feature type="helix" evidence="25">
    <location>
        <begin position="400"/>
        <end position="403"/>
    </location>
</feature>
<feature type="helix" evidence="25">
    <location>
        <begin position="404"/>
        <end position="415"/>
    </location>
</feature>
<feature type="turn" evidence="25">
    <location>
        <begin position="416"/>
        <end position="419"/>
    </location>
</feature>
<feature type="helix" evidence="25">
    <location>
        <begin position="423"/>
        <end position="439"/>
    </location>
</feature>
<feature type="helix" evidence="25">
    <location>
        <begin position="445"/>
        <end position="450"/>
    </location>
</feature>
<feature type="helix" evidence="25">
    <location>
        <begin position="451"/>
        <end position="454"/>
    </location>
</feature>
<feature type="helix" evidence="25">
    <location>
        <begin position="458"/>
        <end position="474"/>
    </location>
</feature>
<feature type="helix" evidence="25">
    <location>
        <begin position="477"/>
        <end position="479"/>
    </location>
</feature>
<feature type="helix" evidence="25">
    <location>
        <begin position="481"/>
        <end position="483"/>
    </location>
</feature>
<feature type="helix" evidence="25">
    <location>
        <begin position="484"/>
        <end position="495"/>
    </location>
</feature>
<feature type="helix" evidence="25">
    <location>
        <begin position="500"/>
        <end position="516"/>
    </location>
</feature>
<feature type="helix" evidence="25">
    <location>
        <begin position="518"/>
        <end position="525"/>
    </location>
</feature>
<feature type="helix" evidence="25">
    <location>
        <begin position="530"/>
        <end position="537"/>
    </location>
</feature>
<evidence type="ECO:0000250" key="1"/>
<evidence type="ECO:0000250" key="2">
    <source>
        <dbReference type="UniProtKB" id="Q80TV8"/>
    </source>
</evidence>
<evidence type="ECO:0000255" key="3"/>
<evidence type="ECO:0000256" key="4">
    <source>
        <dbReference type="SAM" id="MobiDB-lite"/>
    </source>
</evidence>
<evidence type="ECO:0000269" key="5">
    <source>
    </source>
</evidence>
<evidence type="ECO:0000269" key="6">
    <source>
    </source>
</evidence>
<evidence type="ECO:0000269" key="7">
    <source>
    </source>
</evidence>
<evidence type="ECO:0000269" key="8">
    <source>
    </source>
</evidence>
<evidence type="ECO:0000269" key="9">
    <source>
    </source>
</evidence>
<evidence type="ECO:0000269" key="10">
    <source>
    </source>
</evidence>
<evidence type="ECO:0000269" key="11">
    <source>
    </source>
</evidence>
<evidence type="ECO:0000269" key="12">
    <source>
    </source>
</evidence>
<evidence type="ECO:0000269" key="13">
    <source>
    </source>
</evidence>
<evidence type="ECO:0000269" key="14">
    <source>
    </source>
</evidence>
<evidence type="ECO:0000303" key="15">
    <source>
    </source>
</evidence>
<evidence type="ECO:0000303" key="16">
    <source>
    </source>
</evidence>
<evidence type="ECO:0000305" key="17"/>
<evidence type="ECO:0007744" key="18">
    <source>
    </source>
</evidence>
<evidence type="ECO:0007744" key="19">
    <source>
    </source>
</evidence>
<evidence type="ECO:0007744" key="20">
    <source>
    </source>
</evidence>
<evidence type="ECO:0007744" key="21">
    <source>
    </source>
</evidence>
<evidence type="ECO:0007744" key="22">
    <source>
    </source>
</evidence>
<evidence type="ECO:0007744" key="23">
    <source>
    </source>
</evidence>
<evidence type="ECO:0007829" key="24">
    <source>
        <dbReference type="PDB" id="6MQ5"/>
    </source>
</evidence>
<evidence type="ECO:0007829" key="25">
    <source>
        <dbReference type="PDB" id="6MQ7"/>
    </source>
</evidence>
<gene>
    <name type="primary">CLASP1</name>
    <name type="synonym">KIAA0622</name>
    <name type="synonym">MAST1</name>
</gene>
<keyword id="KW-0002">3D-structure</keyword>
<keyword id="KW-0025">Alternative splicing</keyword>
<keyword id="KW-0131">Cell cycle</keyword>
<keyword id="KW-0132">Cell division</keyword>
<keyword id="KW-0137">Centromere</keyword>
<keyword id="KW-0158">Chromosome</keyword>
<keyword id="KW-0175">Coiled coil</keyword>
<keyword id="KW-0963">Cytoplasm</keyword>
<keyword id="KW-0206">Cytoskeleton</keyword>
<keyword id="KW-0333">Golgi apparatus</keyword>
<keyword id="KW-0995">Kinetochore</keyword>
<keyword id="KW-0493">Microtubule</keyword>
<keyword id="KW-0498">Mitosis</keyword>
<keyword id="KW-0597">Phosphoprotein</keyword>
<keyword id="KW-1267">Proteomics identification</keyword>
<keyword id="KW-1185">Reference proteome</keyword>
<keyword id="KW-0677">Repeat</keyword>
<dbReference type="EMBL" id="AF347693">
    <property type="protein sequence ID" value="AAQ15051.1"/>
    <property type="molecule type" value="mRNA"/>
</dbReference>
<dbReference type="EMBL" id="AC012447">
    <property type="status" value="NOT_ANNOTATED_CDS"/>
    <property type="molecule type" value="Genomic_DNA"/>
</dbReference>
<dbReference type="EMBL" id="AC013399">
    <property type="protein sequence ID" value="AAX88872.1"/>
    <property type="status" value="ALT_SEQ"/>
    <property type="molecule type" value="Genomic_DNA"/>
</dbReference>
<dbReference type="EMBL" id="AC018737">
    <property type="status" value="NOT_ANNOTATED_CDS"/>
    <property type="molecule type" value="Genomic_DNA"/>
</dbReference>
<dbReference type="EMBL" id="AC079449">
    <property type="status" value="NOT_ANNOTATED_CDS"/>
    <property type="molecule type" value="Genomic_DNA"/>
</dbReference>
<dbReference type="EMBL" id="BC032563">
    <property type="protein sequence ID" value="AAH32563.1"/>
    <property type="status" value="ALT_INIT"/>
    <property type="molecule type" value="mRNA"/>
</dbReference>
<dbReference type="EMBL" id="BC112940">
    <property type="protein sequence ID" value="AAI12941.1"/>
    <property type="molecule type" value="mRNA"/>
</dbReference>
<dbReference type="EMBL" id="BC132723">
    <property type="protein sequence ID" value="AAI32724.1"/>
    <property type="molecule type" value="mRNA"/>
</dbReference>
<dbReference type="EMBL" id="BC144107">
    <property type="protein sequence ID" value="AAI44108.1"/>
    <property type="molecule type" value="mRNA"/>
</dbReference>
<dbReference type="EMBL" id="AJ288057">
    <property type="protein sequence ID" value="CAC35156.1"/>
    <property type="molecule type" value="mRNA"/>
</dbReference>
<dbReference type="EMBL" id="CR933722">
    <property type="protein sequence ID" value="CAI46251.1"/>
    <property type="molecule type" value="mRNA"/>
</dbReference>
<dbReference type="EMBL" id="AB014522">
    <property type="protein sequence ID" value="BAA31597.1"/>
    <property type="molecule type" value="mRNA"/>
</dbReference>
<dbReference type="CCDS" id="CCDS92851.1">
    <molecule id="Q7Z460-2"/>
</dbReference>
<dbReference type="CCDS" id="CCDS92852.1">
    <molecule id="Q7Z460-1"/>
</dbReference>
<dbReference type="CCDS" id="CCDS92854.1">
    <molecule id="Q7Z460-4"/>
</dbReference>
<dbReference type="PIR" id="T00387">
    <property type="entry name" value="T00387"/>
</dbReference>
<dbReference type="RefSeq" id="NP_001135745.1">
    <molecule id="Q7Z460-5"/>
    <property type="nucleotide sequence ID" value="NM_001142273.2"/>
</dbReference>
<dbReference type="RefSeq" id="NP_001135746.1">
    <molecule id="Q7Z460-2"/>
    <property type="nucleotide sequence ID" value="NM_001142274.2"/>
</dbReference>
<dbReference type="RefSeq" id="NP_001193980.1">
    <molecule id="Q7Z460-4"/>
    <property type="nucleotide sequence ID" value="NM_001207051.2"/>
</dbReference>
<dbReference type="RefSeq" id="NP_056097.1">
    <molecule id="Q7Z460-1"/>
    <property type="nucleotide sequence ID" value="NM_015282.3"/>
</dbReference>
<dbReference type="RefSeq" id="XP_011509150.1">
    <molecule id="Q7Z460-3"/>
    <property type="nucleotide sequence ID" value="XM_011510848.2"/>
</dbReference>
<dbReference type="RefSeq" id="XP_047299740.1">
    <molecule id="Q7Z460-5"/>
    <property type="nucleotide sequence ID" value="XM_047443784.1"/>
</dbReference>
<dbReference type="RefSeq" id="XP_047299741.1">
    <molecule id="Q7Z460-4"/>
    <property type="nucleotide sequence ID" value="XM_047443785.1"/>
</dbReference>
<dbReference type="RefSeq" id="XP_047299742.1">
    <molecule id="Q7Z460-2"/>
    <property type="nucleotide sequence ID" value="XM_047443786.1"/>
</dbReference>
<dbReference type="RefSeq" id="XP_054197107.1">
    <molecule id="Q7Z460-3"/>
    <property type="nucleotide sequence ID" value="XM_054341132.1"/>
</dbReference>
<dbReference type="PDB" id="4K92">
    <property type="method" value="X-ray"/>
    <property type="resolution" value="2.00 A"/>
    <property type="chains" value="A/B=284-552"/>
</dbReference>
<dbReference type="PDB" id="6MQ5">
    <property type="method" value="X-ray"/>
    <property type="resolution" value="2.15 A"/>
    <property type="chains" value="A/B=1-257"/>
</dbReference>
<dbReference type="PDB" id="6MQ7">
    <property type="method" value="X-ray"/>
    <property type="resolution" value="1.78 A"/>
    <property type="chains" value="A/B=284-552"/>
</dbReference>
<dbReference type="PDBsum" id="4K92"/>
<dbReference type="PDBsum" id="6MQ5"/>
<dbReference type="PDBsum" id="6MQ7"/>
<dbReference type="SMR" id="Q7Z460"/>
<dbReference type="BioGRID" id="116919">
    <property type="interactions" value="129"/>
</dbReference>
<dbReference type="FunCoup" id="Q7Z460">
    <property type="interactions" value="1974"/>
</dbReference>
<dbReference type="IntAct" id="Q7Z460">
    <property type="interactions" value="93"/>
</dbReference>
<dbReference type="MINT" id="Q7Z460"/>
<dbReference type="STRING" id="9606.ENSP00000263710"/>
<dbReference type="DrugBank" id="DB12010">
    <property type="generic name" value="Fostamatinib"/>
</dbReference>
<dbReference type="GlyCosmos" id="Q7Z460">
    <property type="glycosylation" value="1 site, 1 glycan"/>
</dbReference>
<dbReference type="GlyGen" id="Q7Z460">
    <property type="glycosylation" value="6 sites, 1 N-linked glycan (1 site), 1 O-linked glycan (4 sites)"/>
</dbReference>
<dbReference type="iPTMnet" id="Q7Z460"/>
<dbReference type="MetOSite" id="Q7Z460"/>
<dbReference type="PhosphoSitePlus" id="Q7Z460"/>
<dbReference type="SwissPalm" id="Q7Z460"/>
<dbReference type="BioMuta" id="CLASP1"/>
<dbReference type="DMDM" id="74723323"/>
<dbReference type="jPOST" id="Q7Z460"/>
<dbReference type="MassIVE" id="Q7Z460"/>
<dbReference type="PaxDb" id="9606-ENSP00000263710"/>
<dbReference type="PeptideAtlas" id="Q7Z460"/>
<dbReference type="ProteomicsDB" id="24199"/>
<dbReference type="ProteomicsDB" id="69152">
    <molecule id="Q7Z460-1"/>
</dbReference>
<dbReference type="ProteomicsDB" id="69153">
    <molecule id="Q7Z460-2"/>
</dbReference>
<dbReference type="ProteomicsDB" id="69154">
    <molecule id="Q7Z460-3"/>
</dbReference>
<dbReference type="ProteomicsDB" id="7239"/>
<dbReference type="Pumba" id="Q7Z460"/>
<dbReference type="Antibodypedia" id="33401">
    <property type="antibodies" value="300 antibodies from 33 providers"/>
</dbReference>
<dbReference type="DNASU" id="23332"/>
<dbReference type="Ensembl" id="ENST00000263710.8">
    <molecule id="Q7Z460-1"/>
    <property type="protein sequence ID" value="ENSP00000263710.4"/>
    <property type="gene ID" value="ENSG00000074054.21"/>
</dbReference>
<dbReference type="Ensembl" id="ENST00000409078.8">
    <molecule id="Q7Z460-2"/>
    <property type="protein sequence ID" value="ENSP00000386442.3"/>
    <property type="gene ID" value="ENSG00000074054.21"/>
</dbReference>
<dbReference type="Ensembl" id="ENST00000541377.5">
    <molecule id="Q7Z460-4"/>
    <property type="protein sequence ID" value="ENSP00000441625.1"/>
    <property type="gene ID" value="ENSG00000074054.21"/>
</dbReference>
<dbReference type="GeneID" id="23332"/>
<dbReference type="KEGG" id="hsa:23332"/>
<dbReference type="UCSC" id="uc061nlf.1">
    <molecule id="Q7Z460-1"/>
    <property type="organism name" value="human"/>
</dbReference>
<dbReference type="AGR" id="HGNC:17088"/>
<dbReference type="CTD" id="23332"/>
<dbReference type="DisGeNET" id="23332"/>
<dbReference type="GeneCards" id="CLASP1"/>
<dbReference type="HGNC" id="HGNC:17088">
    <property type="gene designation" value="CLASP1"/>
</dbReference>
<dbReference type="HPA" id="ENSG00000074054">
    <property type="expression patterns" value="Low tissue specificity"/>
</dbReference>
<dbReference type="MalaCards" id="CLASP1"/>
<dbReference type="MIM" id="605852">
    <property type="type" value="gene"/>
</dbReference>
<dbReference type="neXtProt" id="NX_Q7Z460"/>
<dbReference type="OpenTargets" id="ENSG00000074054"/>
<dbReference type="PharmGKB" id="PA38436"/>
<dbReference type="VEuPathDB" id="HostDB:ENSG00000074054"/>
<dbReference type="eggNOG" id="KOG2956">
    <property type="taxonomic scope" value="Eukaryota"/>
</dbReference>
<dbReference type="GeneTree" id="ENSGT00940000154817"/>
<dbReference type="InParanoid" id="Q7Z460"/>
<dbReference type="OMA" id="KMRHNWL"/>
<dbReference type="OrthoDB" id="46159at2759"/>
<dbReference type="PAN-GO" id="Q7Z460">
    <property type="GO annotations" value="10 GO annotations based on evolutionary models"/>
</dbReference>
<dbReference type="PhylomeDB" id="Q7Z460"/>
<dbReference type="TreeFam" id="TF101155"/>
<dbReference type="PathwayCommons" id="Q7Z460"/>
<dbReference type="Reactome" id="R-HSA-141444">
    <property type="pathway name" value="Amplification of signal from unattached kinetochores via a MAD2 inhibitory signal"/>
</dbReference>
<dbReference type="Reactome" id="R-HSA-2467813">
    <property type="pathway name" value="Separation of Sister Chromatids"/>
</dbReference>
<dbReference type="Reactome" id="R-HSA-2500257">
    <property type="pathway name" value="Resolution of Sister Chromatid Cohesion"/>
</dbReference>
<dbReference type="Reactome" id="R-HSA-2565942">
    <property type="pathway name" value="Regulation of PLK1 Activity at G2/M Transition"/>
</dbReference>
<dbReference type="Reactome" id="R-HSA-380259">
    <property type="pathway name" value="Loss of Nlp from mitotic centrosomes"/>
</dbReference>
<dbReference type="Reactome" id="R-HSA-380270">
    <property type="pathway name" value="Recruitment of mitotic centrosome proteins and complexes"/>
</dbReference>
<dbReference type="Reactome" id="R-HSA-380284">
    <property type="pathway name" value="Loss of proteins required for interphase microtubule organization from the centrosome"/>
</dbReference>
<dbReference type="Reactome" id="R-HSA-380320">
    <property type="pathway name" value="Recruitment of NuMA to mitotic centrosomes"/>
</dbReference>
<dbReference type="Reactome" id="R-HSA-428890">
    <property type="pathway name" value="Role of ABL in ROBO-SLIT signaling"/>
</dbReference>
<dbReference type="Reactome" id="R-HSA-5620912">
    <property type="pathway name" value="Anchoring of the basal body to the plasma membrane"/>
</dbReference>
<dbReference type="Reactome" id="R-HSA-5663220">
    <property type="pathway name" value="RHO GTPases Activate Formins"/>
</dbReference>
<dbReference type="Reactome" id="R-HSA-68877">
    <property type="pathway name" value="Mitotic Prometaphase"/>
</dbReference>
<dbReference type="Reactome" id="R-HSA-8854518">
    <property type="pathway name" value="AURKA Activation by TPX2"/>
</dbReference>
<dbReference type="Reactome" id="R-HSA-9648025">
    <property type="pathway name" value="EML4 and NUDC in mitotic spindle formation"/>
</dbReference>
<dbReference type="SignaLink" id="Q7Z460"/>
<dbReference type="SIGNOR" id="Q7Z460"/>
<dbReference type="BioGRID-ORCS" id="23332">
    <property type="hits" value="19 hits in 398 CRISPR screens"/>
</dbReference>
<dbReference type="CD-CODE" id="91857CE7">
    <property type="entry name" value="Nucleolus"/>
</dbReference>
<dbReference type="CD-CODE" id="FB4E32DD">
    <property type="entry name" value="Presynaptic clusters and postsynaptic densities"/>
</dbReference>
<dbReference type="ChiTaRS" id="CLASP1">
    <property type="organism name" value="human"/>
</dbReference>
<dbReference type="EvolutionaryTrace" id="Q7Z460"/>
<dbReference type="GeneWiki" id="CLASP1"/>
<dbReference type="GenomeRNAi" id="23332"/>
<dbReference type="Pharos" id="Q7Z460">
    <property type="development level" value="Tbio"/>
</dbReference>
<dbReference type="PRO" id="PR:Q7Z460"/>
<dbReference type="Proteomes" id="UP000005640">
    <property type="component" value="Chromosome 2"/>
</dbReference>
<dbReference type="RNAct" id="Q7Z460">
    <property type="molecule type" value="protein"/>
</dbReference>
<dbReference type="Bgee" id="ENSG00000074054">
    <property type="expression patterns" value="Expressed in cortical plate and 203 other cell types or tissues"/>
</dbReference>
<dbReference type="ExpressionAtlas" id="Q7Z460">
    <property type="expression patterns" value="baseline and differential"/>
</dbReference>
<dbReference type="GO" id="GO:0045180">
    <property type="term" value="C:basal cortex"/>
    <property type="evidence" value="ECO:0000314"/>
    <property type="project" value="UniProtKB"/>
</dbReference>
<dbReference type="GO" id="GO:0005938">
    <property type="term" value="C:cell cortex"/>
    <property type="evidence" value="ECO:0000314"/>
    <property type="project" value="MGI"/>
</dbReference>
<dbReference type="GO" id="GO:0031592">
    <property type="term" value="C:centrosomal corona"/>
    <property type="evidence" value="ECO:0000314"/>
    <property type="project" value="UniProtKB"/>
</dbReference>
<dbReference type="GO" id="GO:0005813">
    <property type="term" value="C:centrosome"/>
    <property type="evidence" value="ECO:0000314"/>
    <property type="project" value="UniProtKB"/>
</dbReference>
<dbReference type="GO" id="GO:0030981">
    <property type="term" value="C:cortical microtubule cytoskeleton"/>
    <property type="evidence" value="ECO:0000314"/>
    <property type="project" value="UniProtKB"/>
</dbReference>
<dbReference type="GO" id="GO:0005881">
    <property type="term" value="C:cytoplasmic microtubule"/>
    <property type="evidence" value="ECO:0000314"/>
    <property type="project" value="UniProtKB"/>
</dbReference>
<dbReference type="GO" id="GO:0005829">
    <property type="term" value="C:cytosol"/>
    <property type="evidence" value="ECO:0000304"/>
    <property type="project" value="Reactome"/>
</dbReference>
<dbReference type="GO" id="GO:0005794">
    <property type="term" value="C:Golgi apparatus"/>
    <property type="evidence" value="ECO:0000314"/>
    <property type="project" value="UniProtKB"/>
</dbReference>
<dbReference type="GO" id="GO:0000776">
    <property type="term" value="C:kinetochore"/>
    <property type="evidence" value="ECO:0000314"/>
    <property type="project" value="UniProtKB"/>
</dbReference>
<dbReference type="GO" id="GO:0005828">
    <property type="term" value="C:kinetochore microtubule"/>
    <property type="evidence" value="ECO:0000304"/>
    <property type="project" value="UniProtKB"/>
</dbReference>
<dbReference type="GO" id="GO:0016020">
    <property type="term" value="C:membrane"/>
    <property type="evidence" value="ECO:0007005"/>
    <property type="project" value="UniProtKB"/>
</dbReference>
<dbReference type="GO" id="GO:0005815">
    <property type="term" value="C:microtubule organizing center"/>
    <property type="evidence" value="ECO:0000318"/>
    <property type="project" value="GO_Central"/>
</dbReference>
<dbReference type="GO" id="GO:0035371">
    <property type="term" value="C:microtubule plus-end"/>
    <property type="evidence" value="ECO:0000250"/>
    <property type="project" value="UniProtKB"/>
</dbReference>
<dbReference type="GO" id="GO:0072686">
    <property type="term" value="C:mitotic spindle"/>
    <property type="evidence" value="ECO:0000318"/>
    <property type="project" value="GO_Central"/>
</dbReference>
<dbReference type="GO" id="GO:0005876">
    <property type="term" value="C:spindle microtubule"/>
    <property type="evidence" value="ECO:0000314"/>
    <property type="project" value="UniProtKB"/>
</dbReference>
<dbReference type="GO" id="GO:0002162">
    <property type="term" value="F:dystroglycan binding"/>
    <property type="evidence" value="ECO:0000353"/>
    <property type="project" value="UniProtKB"/>
</dbReference>
<dbReference type="GO" id="GO:0043515">
    <property type="term" value="F:kinetochore binding"/>
    <property type="evidence" value="ECO:0000315"/>
    <property type="project" value="UniProtKB"/>
</dbReference>
<dbReference type="GO" id="GO:0008017">
    <property type="term" value="F:microtubule binding"/>
    <property type="evidence" value="ECO:0000314"/>
    <property type="project" value="UniProtKB"/>
</dbReference>
<dbReference type="GO" id="GO:0051010">
    <property type="term" value="F:microtubule plus-end binding"/>
    <property type="evidence" value="ECO:0000314"/>
    <property type="project" value="UniProtKB"/>
</dbReference>
<dbReference type="GO" id="GO:0030953">
    <property type="term" value="P:astral microtubule organization"/>
    <property type="evidence" value="ECO:0000315"/>
    <property type="project" value="UniProtKB"/>
</dbReference>
<dbReference type="GO" id="GO:0071711">
    <property type="term" value="P:basement membrane organization"/>
    <property type="evidence" value="ECO:0000315"/>
    <property type="project" value="UniProtKB"/>
</dbReference>
<dbReference type="GO" id="GO:0051301">
    <property type="term" value="P:cell division"/>
    <property type="evidence" value="ECO:0000314"/>
    <property type="project" value="MGI"/>
</dbReference>
<dbReference type="GO" id="GO:0040001">
    <property type="term" value="P:establishment of mitotic spindle localization"/>
    <property type="evidence" value="ECO:0000315"/>
    <property type="project" value="UniProtKB"/>
</dbReference>
<dbReference type="GO" id="GO:0051294">
    <property type="term" value="P:establishment of spindle orientation"/>
    <property type="evidence" value="ECO:0000314"/>
    <property type="project" value="MGI"/>
</dbReference>
<dbReference type="GO" id="GO:0007163">
    <property type="term" value="P:establishment or maintenance of cell polarity"/>
    <property type="evidence" value="ECO:0000303"/>
    <property type="project" value="UniProtKB"/>
</dbReference>
<dbReference type="GO" id="GO:0010458">
    <property type="term" value="P:exit from mitosis"/>
    <property type="evidence" value="ECO:0000315"/>
    <property type="project" value="UniProtKB"/>
</dbReference>
<dbReference type="GO" id="GO:0007030">
    <property type="term" value="P:Golgi organization"/>
    <property type="evidence" value="ECO:0000315"/>
    <property type="project" value="UniProtKB"/>
</dbReference>
<dbReference type="GO" id="GO:0034453">
    <property type="term" value="P:microtubule anchoring"/>
    <property type="evidence" value="ECO:0000315"/>
    <property type="project" value="UniProtKB"/>
</dbReference>
<dbReference type="GO" id="GO:0001578">
    <property type="term" value="P:microtubule bundle formation"/>
    <property type="evidence" value="ECO:0000315"/>
    <property type="project" value="UniProtKB"/>
</dbReference>
<dbReference type="GO" id="GO:0000226">
    <property type="term" value="P:microtubule cytoskeleton organization"/>
    <property type="evidence" value="ECO:0000315"/>
    <property type="project" value="UniProtKB"/>
</dbReference>
<dbReference type="GO" id="GO:0007020">
    <property type="term" value="P:microtubule nucleation"/>
    <property type="evidence" value="ECO:0000315"/>
    <property type="project" value="UniProtKB"/>
</dbReference>
<dbReference type="GO" id="GO:0031023">
    <property type="term" value="P:microtubule organizing center organization"/>
    <property type="evidence" value="ECO:0000315"/>
    <property type="project" value="UniProtKB"/>
</dbReference>
<dbReference type="GO" id="GO:0090307">
    <property type="term" value="P:mitotic spindle assembly"/>
    <property type="evidence" value="ECO:0000250"/>
    <property type="project" value="UniProtKB"/>
</dbReference>
<dbReference type="GO" id="GO:0007052">
    <property type="term" value="P:mitotic spindle organization"/>
    <property type="evidence" value="ECO:0000315"/>
    <property type="project" value="UniProtKB"/>
</dbReference>
<dbReference type="GO" id="GO:0007026">
    <property type="term" value="P:negative regulation of microtubule depolymerization"/>
    <property type="evidence" value="ECO:0000315"/>
    <property type="project" value="UniProtKB"/>
</dbReference>
<dbReference type="GO" id="GO:0031111">
    <property type="term" value="P:negative regulation of microtubule polymerization or depolymerization"/>
    <property type="evidence" value="ECO:0000315"/>
    <property type="project" value="UniProtKB"/>
</dbReference>
<dbReference type="GO" id="GO:0051497">
    <property type="term" value="P:negative regulation of stress fiber assembly"/>
    <property type="evidence" value="ECO:0000315"/>
    <property type="project" value="UniProtKB"/>
</dbReference>
<dbReference type="GO" id="GO:1903690">
    <property type="term" value="P:negative regulation of wound healing, spreading of epidermal cells"/>
    <property type="evidence" value="ECO:0000315"/>
    <property type="project" value="UniProtKB"/>
</dbReference>
<dbReference type="GO" id="GO:0010634">
    <property type="term" value="P:positive regulation of epithelial cell migration"/>
    <property type="evidence" value="ECO:0000315"/>
    <property type="project" value="UniProtKB"/>
</dbReference>
<dbReference type="GO" id="GO:0045921">
    <property type="term" value="P:positive regulation of exocytosis"/>
    <property type="evidence" value="ECO:0000315"/>
    <property type="project" value="UniProtKB"/>
</dbReference>
<dbReference type="GO" id="GO:0090091">
    <property type="term" value="P:positive regulation of extracellular matrix disassembly"/>
    <property type="evidence" value="ECO:0000315"/>
    <property type="project" value="UniProtKB"/>
</dbReference>
<dbReference type="GO" id="GO:0031116">
    <property type="term" value="P:positive regulation of microtubule polymerization"/>
    <property type="evidence" value="ECO:0000250"/>
    <property type="project" value="UniProtKB"/>
</dbReference>
<dbReference type="GO" id="GO:0051893">
    <property type="term" value="P:regulation of focal adhesion assembly"/>
    <property type="evidence" value="ECO:0000315"/>
    <property type="project" value="UniProtKB"/>
</dbReference>
<dbReference type="GO" id="GO:0006903">
    <property type="term" value="P:vesicle targeting"/>
    <property type="evidence" value="ECO:0000315"/>
    <property type="project" value="UniProtKB"/>
</dbReference>
<dbReference type="FunFam" id="1.25.10.10:FF:000001">
    <property type="entry name" value="CLIP-associating protein 1 isoform 2"/>
    <property type="match status" value="1"/>
</dbReference>
<dbReference type="FunFam" id="1.25.10.10:FF:000005">
    <property type="entry name" value="CLIP-associating protein 1 isoform 2"/>
    <property type="match status" value="1"/>
</dbReference>
<dbReference type="FunFam" id="1.25.10.10:FF:000006">
    <property type="entry name" value="CLIP-associating protein 1 isoform 2"/>
    <property type="match status" value="1"/>
</dbReference>
<dbReference type="FunFam" id="1.25.10.10:FF:000031">
    <property type="entry name" value="CLIP-associating protein 1 isoform 2"/>
    <property type="match status" value="1"/>
</dbReference>
<dbReference type="Gene3D" id="1.25.10.10">
    <property type="entry name" value="Leucine-rich Repeat Variant"/>
    <property type="match status" value="4"/>
</dbReference>
<dbReference type="InterPro" id="IPR011989">
    <property type="entry name" value="ARM-like"/>
</dbReference>
<dbReference type="InterPro" id="IPR016024">
    <property type="entry name" value="ARM-type_fold"/>
</dbReference>
<dbReference type="InterPro" id="IPR024395">
    <property type="entry name" value="CLASP_N_dom"/>
</dbReference>
<dbReference type="InterPro" id="IPR021133">
    <property type="entry name" value="HEAT_type_2"/>
</dbReference>
<dbReference type="InterPro" id="IPR034085">
    <property type="entry name" value="TOG"/>
</dbReference>
<dbReference type="InterPro" id="IPR048491">
    <property type="entry name" value="XMAP215_CLASP_TOG"/>
</dbReference>
<dbReference type="PANTHER" id="PTHR21567">
    <property type="entry name" value="CLASP"/>
    <property type="match status" value="1"/>
</dbReference>
<dbReference type="PANTHER" id="PTHR21567:SF28">
    <property type="entry name" value="CLIP-ASSOCIATING PROTEIN 1"/>
    <property type="match status" value="1"/>
</dbReference>
<dbReference type="Pfam" id="PF21040">
    <property type="entry name" value="CEP104-like_TOG"/>
    <property type="match status" value="1"/>
</dbReference>
<dbReference type="Pfam" id="PF12348">
    <property type="entry name" value="CLASP_N"/>
    <property type="match status" value="1"/>
</dbReference>
<dbReference type="Pfam" id="PF21041">
    <property type="entry name" value="XMAP215_CLASP_TOG"/>
    <property type="match status" value="1"/>
</dbReference>
<dbReference type="SMART" id="SM01349">
    <property type="entry name" value="TOG"/>
    <property type="match status" value="4"/>
</dbReference>
<dbReference type="SUPFAM" id="SSF48371">
    <property type="entry name" value="ARM repeat"/>
    <property type="match status" value="2"/>
</dbReference>
<dbReference type="PROSITE" id="PS50077">
    <property type="entry name" value="HEAT_REPEAT"/>
    <property type="match status" value="1"/>
</dbReference>
<proteinExistence type="evidence at protein level"/>
<accession>Q7Z460</accession>
<accession>A2RU21</accession>
<accession>B7ZLX3</accession>
<accession>F5GWS0</accession>
<accession>O75118</accession>
<accession>Q2KHQ9</accession>
<accession>Q5H9P0</accession>
<accession>Q8N5B8</accession>
<accession>Q9BQT5</accession>
<organism>
    <name type="scientific">Homo sapiens</name>
    <name type="common">Human</name>
    <dbReference type="NCBI Taxonomy" id="9606"/>
    <lineage>
        <taxon>Eukaryota</taxon>
        <taxon>Metazoa</taxon>
        <taxon>Chordata</taxon>
        <taxon>Craniata</taxon>
        <taxon>Vertebrata</taxon>
        <taxon>Euteleostomi</taxon>
        <taxon>Mammalia</taxon>
        <taxon>Eutheria</taxon>
        <taxon>Euarchontoglires</taxon>
        <taxon>Primates</taxon>
        <taxon>Haplorrhini</taxon>
        <taxon>Catarrhini</taxon>
        <taxon>Hominidae</taxon>
        <taxon>Homo</taxon>
    </lineage>
</organism>
<comment type="function">
    <text evidence="5 6 8 11 12 13">Microtubule plus-end tracking protein that promotes the stabilization of dynamic microtubules. Involved in the nucleation of noncentrosomal microtubules originating from the trans-Golgi network (TGN). Required for the polarization of the cytoplasmic microtubule arrays in migrating cells towards the leading edge of the cell. May act at the cell cortex to enhance the frequency of rescue of depolymerizing microtubules by attaching their plus-ends to cortical platforms composed of ERC1 and PHLDB2. This cortical microtubule stabilizing activity is regulated at least in part by phosphatidylinositol 3-kinase signaling. Also performs a similar stabilizing function at the kinetochore which is essential for the bipolar alignment of chromosomes on the mitotic spindle.</text>
</comment>
<comment type="subunit">
    <text evidence="2 5 8 9 10 13 14">Interacts with CLIP2, ERC1, MAPRE1, MAPRE3, microtubules, PHLDB2 and RSN (PubMed:11290329, PubMed:15631994, PubMed:16145243, PubMed:16824950). The interaction with ERC1 may be mediated by PHLDB2 (PubMed:16824950). Interacts with GCC2; recruits CLASP1 to Golgi membranes (PubMed:17543864). Interacts with MACF1 (By similarity). Interacts with mtcl2 and MTCL1 (PubMed:33587225).</text>
</comment>
<comment type="interaction">
    <interactant intactId="EBI-913476">
        <id>Q7Z460</id>
    </interactant>
    <interactant intactId="EBI-465633">
        <id>O60333</id>
        <label>KIF1B</label>
    </interactant>
    <organismsDiffer>false</organismsDiffer>
    <experiments>3</experiments>
</comment>
<comment type="interaction">
    <interactant intactId="EBI-913476">
        <id>Q7Z460</id>
    </interactant>
    <interactant intactId="EBI-476295">
        <id>P31947</id>
        <label>SFN</label>
    </interactant>
    <organismsDiffer>false</organismsDiffer>
    <experiments>3</experiments>
</comment>
<comment type="interaction">
    <interactant intactId="EBI-913476">
        <id>Q7Z460</id>
    </interactant>
    <interactant intactId="EBI-413317">
        <id>Q96R06</id>
        <label>SPAG5</label>
    </interactant>
    <organismsDiffer>false</organismsDiffer>
    <experiments>3</experiments>
</comment>
<comment type="interaction">
    <interactant intactId="EBI-913476">
        <id>Q7Z460</id>
    </interactant>
    <interactant intactId="EBI-356498">
        <id>P62258</id>
        <label>YWHAE</label>
    </interactant>
    <organismsDiffer>false</organismsDiffer>
    <experiments>7</experiments>
</comment>
<comment type="interaction">
    <interactant intactId="EBI-913476">
        <id>Q7Z460</id>
    </interactant>
    <interactant intactId="EBI-908338">
        <id>Q9JK25</id>
        <label>Clip1</label>
    </interactant>
    <organismsDiffer>true</organismsDiffer>
    <experiments>2</experiments>
</comment>
<comment type="interaction">
    <interactant intactId="EBI-913476">
        <id>Q7Z460</id>
    </interactant>
    <interactant intactId="EBI-349416">
        <id>O55156</id>
        <label>Clip2</label>
    </interactant>
    <organismsDiffer>true</organismsDiffer>
    <experiments>3</experiments>
</comment>
<comment type="interaction">
    <interactant intactId="EBI-10967515">
        <id>Q7Z460-2</id>
    </interactant>
    <interactant intactId="EBI-12816095">
        <id>Q9NX95-5</id>
        <label>SYBU</label>
    </interactant>
    <organismsDiffer>false</organismsDiffer>
    <experiments>3</experiments>
</comment>
<comment type="interaction">
    <interactant intactId="EBI-10257534">
        <id>Q7Z460-4</id>
    </interactant>
    <interactant intactId="EBI-752007">
        <id>Q96AA8</id>
        <label>JAKMIP2</label>
    </interactant>
    <organismsDiffer>false</organismsDiffer>
    <experiments>3</experiments>
</comment>
<comment type="subcellular location">
    <subcellularLocation>
        <location>Cytoplasm</location>
        <location>Cytoskeleton</location>
    </subcellularLocation>
    <subcellularLocation>
        <location evidence="7">Cytoplasm</location>
        <location evidence="7">Cytoskeleton</location>
        <location evidence="7">Microtubule organizing center</location>
        <location evidence="7">Centrosome</location>
    </subcellularLocation>
    <subcellularLocation>
        <location>Chromosome</location>
        <location>Centromere</location>
        <location>Kinetochore</location>
    </subcellularLocation>
    <subcellularLocation>
        <location>Cytoplasm</location>
        <location>Cytoskeleton</location>
        <location>Spindle</location>
    </subcellularLocation>
    <subcellularLocation>
        <location evidence="17">Golgi apparatus</location>
        <location evidence="17">trans-Golgi network</location>
    </subcellularLocation>
    <text>Localizes to microtubule plus ends. Localizes to centrosomes, kinetochores and the mitotic spindle from prometaphase. Subsequently localizes to the spindle midzone from anaphase and to the midbody from telophase. In migrating cells localizes to the plus ends of microtubules within the cell body and to the entire microtubule lattice within the lamella. Localizes to the cell cortex and this requires ERC1 and PHLDB2.</text>
</comment>
<comment type="alternative products">
    <event type="alternative splicing"/>
    <isoform>
        <id>Q7Z460-1</id>
        <name>1</name>
        <sequence type="displayed"/>
    </isoform>
    <isoform>
        <id>Q7Z460-2</id>
        <name>2</name>
        <sequence type="described" ref="VSP_022386 VSP_022387 VSP_022389"/>
    </isoform>
    <isoform>
        <id>Q7Z460-3</id>
        <name>3</name>
        <sequence type="described" ref="VSP_022386 VSP_022387 VSP_022388 VSP_022389"/>
    </isoform>
    <isoform>
        <id>Q7Z460-4</id>
        <name>4</name>
        <sequence type="described" ref="VSP_054412 VSP_054413 VSP_022386 VSP_054414 VSP_022389"/>
    </isoform>
    <isoform>
        <id>Q7Z460-5</id>
        <name>5</name>
        <sequence type="described" ref="VSP_057272 VSP_022386 VSP_022387 VSP_022389"/>
    </isoform>
</comment>
<comment type="similarity">
    <text evidence="17">Belongs to the CLASP family.</text>
</comment>
<comment type="sequence caution" evidence="17">
    <conflict type="erroneous initiation">
        <sequence resource="EMBL-CDS" id="AAH32563"/>
    </conflict>
    <text>Truncated N-terminus.</text>
</comment>
<comment type="sequence caution" evidence="17">
    <conflict type="erroneous gene model prediction">
        <sequence resource="EMBL-CDS" id="AAX88872"/>
    </conflict>
</comment>
<sequence>MEPRMESCLAQVLQKDVGKRLQVGQELIDYFSDKQKSADLEHDQTMLDKLVDGLATSWVNSSNYKVVLLGMDILSALVTRLQDRFKAQIGTVLPSLIDRLGDAKDSVREQDQTLLLKIMDQAANPQYVWDRMLGGFKHKNFRTREGICLCLIATLNASGAQTLTLSKIVPHICNLLGDPNSQVRDAAINSLVEIYRHVGERVRADLSKKGLPQSRLNVIFTKFDEVQKSGNMIQSANDKNFDDEDSVDGNRPSSASSTSSKAPPSSRRNVGMGTTRRLGSSTLGSKSSAAKEGAGAVDEEDFIKAFDDVPVVQIYSSRDLEESINKIREILSDDKHDWEQRVNALKKIRSLLLAGAAEYDNFFQHLRLLDGAFKLSAKDLRSQVVREACITLGHLSSVLGNKFDHGAEAIMPTIFNLIPNSAKIMATSGVVAVRLIIRHTHIPRLIPVITSNCTSKSVAVRRRCFEFLDLLLQEWQTHSLERHISVLAETIKKGIHDADSEARIEARKCYWGFHSHFSREAEHLYHTLESSYQKALQSHLKNSDSIVSLPQSDRSSSSSQESLNRPLSAKRSPTGSTTSRASTVSTKSVSTTGSLQRSRSDIDVNAAASAKSKVSSSSGTTPFSSAAALPPGSYASLGRIRTRRQSSGSATNVASTPDNRGRSRAKVVSQSQRSRSANPAGAGSRSSSPGKLLGSGYGGLTGGSSRGPPVTPSSEKRSKIPRSQGCSRETSPNRIGLARSSRIPRPSMSQGCSRDTSRESSRDTSPARGFPPLDRFGLGQPGRIPGSVNAMRVLSTSTDLEAAVADALKKPVRRRYEPYGMYSDDDANSDASSVCSERSYGSRNGGIPHYLRQTEDVAEVLNHCASSNWSERKEGLLGLQNLLKSQRTLSRVELKRLCEIFTRMFADPHSKRVFSMFLETLVDFIIIHKDDLQDWLFVLLTQLLKKMGADLLGSVQAKVQKALDVTRDSFPFDQQFNILMRFIVDQTQTPNLKVKVAILKYIESLARQMDPTDFVNSSETRLAVSRIITWTTEPKSSDVRKAAQIVLISLFELNTPEFTMLLGALPKTFQDGATKLLHNHLKNSSNTSVGSPSNTIGRTPSRHTSSRTSPLTSPTNCSHGGLSPSRLWGWSADGLAKHPPPFSQPNSIPTAPSHKALRRSYSPSMLDYDTENLNSEEIYSSLRGVTEAIEKFSFRSQEDLNEPIKRDGKKECDIVSRDGGAASPATEGRGGSEVEGGRTALDNKTSLLNTQPPRAFPGPRARDYNPYPYSDAINTYDKTALKEAVFDDDMEQLRDVPIDHSDLVADLLKELSNHNERVEERKGALLELLKITREDSLGVWEEHFKTILLLLLETLGDKDHSIRALALRVLREILRNQPARFKNYAELTIMKTLEAHKDSHKEVVRAAEEAASTLASSIHPEQCIKVLCPIIQTADYPINLAAIKMQTKVVERIAKESLLQLLVDIIPGLLQGYDNTESSVRKASVFCLVAIYSVIGEDLKPHLAQLTGSKMKLLNLYIKRAQTTNSNSSSSSDVSTHS</sequence>
<reference key="1">
    <citation type="submission" date="2001-02" db="EMBL/GenBank/DDBJ databases">
        <title>Full length cDNA of a human homologue of Drosophila melanogaster multiple asters (MAST) gene.</title>
        <authorList>
            <person name="Maiato H."/>
            <person name="Sunkel C.E."/>
            <person name="Earnshaw W.C."/>
        </authorList>
    </citation>
    <scope>NUCLEOTIDE SEQUENCE [MRNA] (ISOFORM 1)</scope>
</reference>
<reference key="2">
    <citation type="journal article" date="2005" name="Nature">
        <title>Generation and annotation of the DNA sequences of human chromosomes 2 and 4.</title>
        <authorList>
            <person name="Hillier L.W."/>
            <person name="Graves T.A."/>
            <person name="Fulton R.S."/>
            <person name="Fulton L.A."/>
            <person name="Pepin K.H."/>
            <person name="Minx P."/>
            <person name="Wagner-McPherson C."/>
            <person name="Layman D."/>
            <person name="Wylie K."/>
            <person name="Sekhon M."/>
            <person name="Becker M.C."/>
            <person name="Fewell G.A."/>
            <person name="Delehaunty K.D."/>
            <person name="Miner T.L."/>
            <person name="Nash W.E."/>
            <person name="Kremitzki C."/>
            <person name="Oddy L."/>
            <person name="Du H."/>
            <person name="Sun H."/>
            <person name="Bradshaw-Cordum H."/>
            <person name="Ali J."/>
            <person name="Carter J."/>
            <person name="Cordes M."/>
            <person name="Harris A."/>
            <person name="Isak A."/>
            <person name="van Brunt A."/>
            <person name="Nguyen C."/>
            <person name="Du F."/>
            <person name="Courtney L."/>
            <person name="Kalicki J."/>
            <person name="Ozersky P."/>
            <person name="Abbott S."/>
            <person name="Armstrong J."/>
            <person name="Belter E.A."/>
            <person name="Caruso L."/>
            <person name="Cedroni M."/>
            <person name="Cotton M."/>
            <person name="Davidson T."/>
            <person name="Desai A."/>
            <person name="Elliott G."/>
            <person name="Erb T."/>
            <person name="Fronick C."/>
            <person name="Gaige T."/>
            <person name="Haakenson W."/>
            <person name="Haglund K."/>
            <person name="Holmes A."/>
            <person name="Harkins R."/>
            <person name="Kim K."/>
            <person name="Kruchowski S.S."/>
            <person name="Strong C.M."/>
            <person name="Grewal N."/>
            <person name="Goyea E."/>
            <person name="Hou S."/>
            <person name="Levy A."/>
            <person name="Martinka S."/>
            <person name="Mead K."/>
            <person name="McLellan M.D."/>
            <person name="Meyer R."/>
            <person name="Randall-Maher J."/>
            <person name="Tomlinson C."/>
            <person name="Dauphin-Kohlberg S."/>
            <person name="Kozlowicz-Reilly A."/>
            <person name="Shah N."/>
            <person name="Swearengen-Shahid S."/>
            <person name="Snider J."/>
            <person name="Strong J.T."/>
            <person name="Thompson J."/>
            <person name="Yoakum M."/>
            <person name="Leonard S."/>
            <person name="Pearman C."/>
            <person name="Trani L."/>
            <person name="Radionenko M."/>
            <person name="Waligorski J.E."/>
            <person name="Wang C."/>
            <person name="Rock S.M."/>
            <person name="Tin-Wollam A.-M."/>
            <person name="Maupin R."/>
            <person name="Latreille P."/>
            <person name="Wendl M.C."/>
            <person name="Yang S.-P."/>
            <person name="Pohl C."/>
            <person name="Wallis J.W."/>
            <person name="Spieth J."/>
            <person name="Bieri T.A."/>
            <person name="Berkowicz N."/>
            <person name="Nelson J.O."/>
            <person name="Osborne J."/>
            <person name="Ding L."/>
            <person name="Meyer R."/>
            <person name="Sabo A."/>
            <person name="Shotland Y."/>
            <person name="Sinha P."/>
            <person name="Wohldmann P.E."/>
            <person name="Cook L.L."/>
            <person name="Hickenbotham M.T."/>
            <person name="Eldred J."/>
            <person name="Williams D."/>
            <person name="Jones T.A."/>
            <person name="She X."/>
            <person name="Ciccarelli F.D."/>
            <person name="Izaurralde E."/>
            <person name="Taylor J."/>
            <person name="Schmutz J."/>
            <person name="Myers R.M."/>
            <person name="Cox D.R."/>
            <person name="Huang X."/>
            <person name="McPherson J.D."/>
            <person name="Mardis E.R."/>
            <person name="Clifton S.W."/>
            <person name="Warren W.C."/>
            <person name="Chinwalla A.T."/>
            <person name="Eddy S.R."/>
            <person name="Marra M.A."/>
            <person name="Ovcharenko I."/>
            <person name="Furey T.S."/>
            <person name="Miller W."/>
            <person name="Eichler E.E."/>
            <person name="Bork P."/>
            <person name="Suyama M."/>
            <person name="Torrents D."/>
            <person name="Waterston R.H."/>
            <person name="Wilson R.K."/>
        </authorList>
    </citation>
    <scope>NUCLEOTIDE SEQUENCE [LARGE SCALE GENOMIC DNA]</scope>
</reference>
<reference key="3">
    <citation type="journal article" date="2004" name="Genome Res.">
        <title>The status, quality, and expansion of the NIH full-length cDNA project: the Mammalian Gene Collection (MGC).</title>
        <authorList>
            <consortium name="The MGC Project Team"/>
        </authorList>
    </citation>
    <scope>NUCLEOTIDE SEQUENCE [LARGE SCALE MRNA] (ISOFORMS 2; 4 AND 5)</scope>
    <scope>NUCLEOTIDE SEQUENCE [LARGE SCALE MRNA] OF 1332-1538 (ISOFORMS 1/2)</scope>
    <source>
        <tissue>Eye</tissue>
    </source>
</reference>
<reference key="4">
    <citation type="journal article" date="2001" name="Cell">
        <title>Clasps are CLIP-115 and -170 associating proteins involved in the regional regulation of microtubule dynamics in motile fibroblasts.</title>
        <authorList>
            <person name="Akhmanova A."/>
            <person name="Hoogenraad C.C."/>
            <person name="Drabek K."/>
            <person name="Stepanova T."/>
            <person name="Dortland B."/>
            <person name="Verkerk T."/>
            <person name="Vermeulen W."/>
            <person name="Burgering B.M."/>
            <person name="de Zeeuw C.I."/>
            <person name="Grosveld F."/>
            <person name="Galjart N."/>
        </authorList>
    </citation>
    <scope>NUCLEOTIDE SEQUENCE [MRNA] OF 1-266</scope>
    <scope>FUNCTION</scope>
    <scope>SUBCELLULAR LOCATION</scope>
    <scope>ALTERNATIVE SPLICING</scope>
    <scope>INTERACTION WITH CLIP2; MICROTUBULES AND RSN</scope>
    <source>
        <tissue>Brain</tissue>
    </source>
</reference>
<reference key="5">
    <citation type="journal article" date="2007" name="BMC Genomics">
        <title>The full-ORF clone resource of the German cDNA consortium.</title>
        <authorList>
            <person name="Bechtel S."/>
            <person name="Rosenfelder H."/>
            <person name="Duda A."/>
            <person name="Schmidt C.P."/>
            <person name="Ernst U."/>
            <person name="Wellenreuther R."/>
            <person name="Mehrle A."/>
            <person name="Schuster C."/>
            <person name="Bahr A."/>
            <person name="Bloecker H."/>
            <person name="Heubner D."/>
            <person name="Hoerlein A."/>
            <person name="Michel G."/>
            <person name="Wedler H."/>
            <person name="Koehrer K."/>
            <person name="Ottenwaelder B."/>
            <person name="Poustka A."/>
            <person name="Wiemann S."/>
            <person name="Schupp I."/>
        </authorList>
    </citation>
    <scope>NUCLEOTIDE SEQUENCE [LARGE SCALE MRNA] OF 221-1538 (ISOFORM 3)</scope>
    <source>
        <tissue>Testis</tissue>
    </source>
</reference>
<reference key="6">
    <citation type="journal article" date="1998" name="DNA Res.">
        <title>Prediction of the coding sequences of unidentified human genes. X. The complete sequences of 100 new cDNA clones from brain which can code for large proteins in vitro.</title>
        <authorList>
            <person name="Ishikawa K."/>
            <person name="Nagase T."/>
            <person name="Suyama M."/>
            <person name="Miyajima N."/>
            <person name="Tanaka A."/>
            <person name="Kotani H."/>
            <person name="Nomura N."/>
            <person name="Ohara O."/>
        </authorList>
    </citation>
    <scope>NUCLEOTIDE SEQUENCE [LARGE SCALE MRNA] OF 250-1538</scope>
    <source>
        <tissue>Brain</tissue>
    </source>
</reference>
<reference key="7">
    <citation type="journal article" date="2003" name="Cell">
        <title>Human CLASP1 is an outer kinetochore component that regulates spindle microtubule dynamics.</title>
        <authorList>
            <person name="Maiato H."/>
            <person name="Fairley E.A."/>
            <person name="Rieder C.L."/>
            <person name="Swedlow J.R."/>
            <person name="Sunkel C.E."/>
            <person name="Earnshaw W.C."/>
        </authorList>
    </citation>
    <scope>FUNCTION</scope>
    <scope>SUBCELLULAR LOCATION</scope>
</reference>
<reference key="8">
    <citation type="journal article" date="2003" name="Nature">
        <title>Proteomic characterization of the human centrosome by protein correlation profiling.</title>
        <authorList>
            <person name="Andersen J.S."/>
            <person name="Wilkinson C.J."/>
            <person name="Mayor T."/>
            <person name="Mortensen P."/>
            <person name="Nigg E.A."/>
            <person name="Mann M."/>
        </authorList>
    </citation>
    <scope>IDENTIFICATION BY MASS SPECTROMETRY</scope>
    <scope>SUBCELLULAR LOCATION [LARGE SCALE ANALYSIS]</scope>
    <source>
        <tissue>Lymphoblast</tissue>
    </source>
</reference>
<reference key="9">
    <citation type="journal article" date="2005" name="Cell Struct. Funct.">
        <title>Microtubule bundle formation and cell death induced by the human CLASP/Orbit N-terminal fragment.</title>
        <authorList>
            <person name="Aonuma M."/>
            <person name="Miyamoto M."/>
            <person name="Inoue Y.H."/>
            <person name="Tamai K."/>
            <person name="Sakai H."/>
            <person name="Kamasawa N."/>
            <person name="Matsukage A."/>
        </authorList>
    </citation>
    <scope>INTERACTION WITH MICROTUBULES</scope>
    <scope>SUBCELLULAR LOCATION</scope>
</reference>
<reference key="10">
    <citation type="journal article" date="2005" name="J. Cell Biol.">
        <title>CLASP1 and CLASP2 bind to EB1 and regulate microtubule plus-end dynamics at the cell cortex.</title>
        <authorList>
            <person name="Mimori-Kiyosue Y."/>
            <person name="Grigoriev I."/>
            <person name="Lansbergen G."/>
            <person name="Sasaki H."/>
            <person name="Matsui C."/>
            <person name="Severin F."/>
            <person name="Galjart N."/>
            <person name="Grosveld F."/>
            <person name="Vorobjev I."/>
            <person name="Tsukita S."/>
            <person name="Akhmanova A."/>
        </authorList>
    </citation>
    <scope>FUNCTION</scope>
    <scope>INTERACTION WITH MAPRE1; MAPRE3; MICROTUBULES AND RSN</scope>
    <scope>SUBCELLULAR LOCATION</scope>
</reference>
<reference key="11">
    <citation type="journal article" date="2006" name="Dev. Cell">
        <title>CLASPs attach microtubule plus ends to the cell cortex through a complex with LL5beta.</title>
        <authorList>
            <person name="Lansbergen G."/>
            <person name="Grigoriev I."/>
            <person name="Mimori-Kiyosue Y."/>
            <person name="Ohtsuka T."/>
            <person name="Higa S."/>
            <person name="Kitajima I."/>
            <person name="Demmers J."/>
            <person name="Galjart N."/>
            <person name="Houtsmuller A.B."/>
            <person name="Grosveld F."/>
            <person name="Akhmanova A."/>
        </authorList>
    </citation>
    <scope>INTERACTION WITH ERC1 AND PHLDB2</scope>
    <scope>SUBCELLULAR LOCATION</scope>
</reference>
<reference key="12">
    <citation type="journal article" date="2006" name="Genes Cells">
        <title>Mammalian CLASPs are required for mitotic spindle organization and kinetochore alignment.</title>
        <authorList>
            <person name="Mimori-Kiyosue Y."/>
            <person name="Grigoriev I."/>
            <person name="Sasaki H."/>
            <person name="Matsui C."/>
            <person name="Akhmanova A."/>
            <person name="Tsukita S."/>
            <person name="Vorobjev I."/>
        </authorList>
    </citation>
    <scope>FUNCTION</scope>
</reference>
<reference key="13">
    <citation type="journal article" date="2006" name="Mol. Biol. Cell">
        <title>Mammalian CLASP1 and CLASP2 cooperate to ensure mitotic fidelity by regulating spindle and kinetochore function.</title>
        <authorList>
            <person name="Pereira A.L."/>
            <person name="Pereira A.J."/>
            <person name="Maia A.R.R."/>
            <person name="Drabek K."/>
            <person name="Sayas C.L."/>
            <person name="Hergert P.J."/>
            <person name="Lince-Faria M."/>
            <person name="Matos I."/>
            <person name="Duque C."/>
            <person name="Stepanova T."/>
            <person name="Rieder C.L."/>
            <person name="Earnshaw W.C."/>
            <person name="Galjart N."/>
            <person name="Maiato H."/>
        </authorList>
    </citation>
    <scope>FUNCTION</scope>
    <scope>SUBCELLULAR LOCATION</scope>
</reference>
<reference key="14">
    <citation type="journal article" date="2007" name="Dev. Cell">
        <title>Asymmetric CLASP-dependent nucleation of noncentrosomal microtubules at the trans-Golgi network.</title>
        <authorList>
            <person name="Efimov A."/>
            <person name="Kharitonov A."/>
            <person name="Efimova N."/>
            <person name="Loncarek J."/>
            <person name="Miller P.M."/>
            <person name="Andreyeva N."/>
            <person name="Gleeson P."/>
            <person name="Galjart N."/>
            <person name="Maia A.R."/>
            <person name="McLeod I.X."/>
            <person name="Yates J.R. III"/>
            <person name="Maiato H."/>
            <person name="Khodjakov A."/>
            <person name="Akhmanova A."/>
            <person name="Kaverina I."/>
        </authorList>
    </citation>
    <scope>FUNCTION</scope>
    <scope>INTERACTION WITH GCC2</scope>
    <scope>SUBCELLULAR LOCATION</scope>
</reference>
<reference key="15">
    <citation type="journal article" date="2008" name="J. Proteome Res.">
        <title>Combining protein-based IMAC, peptide-based IMAC, and MudPIT for efficient phosphoproteomic analysis.</title>
        <authorList>
            <person name="Cantin G.T."/>
            <person name="Yi W."/>
            <person name="Lu B."/>
            <person name="Park S.K."/>
            <person name="Xu T."/>
            <person name="Lee J.-D."/>
            <person name="Yates J.R. III"/>
        </authorList>
    </citation>
    <scope>IDENTIFICATION BY MASS SPECTROMETRY [LARGE SCALE ANALYSIS]</scope>
    <source>
        <tissue>Cervix carcinoma</tissue>
    </source>
</reference>
<reference key="16">
    <citation type="journal article" date="2008" name="J. Proteome Res.">
        <title>Phosphoproteome of resting human platelets.</title>
        <authorList>
            <person name="Zahedi R.P."/>
            <person name="Lewandrowski U."/>
            <person name="Wiesner J."/>
            <person name="Wortelkamp S."/>
            <person name="Moebius J."/>
            <person name="Schuetz C."/>
            <person name="Walter U."/>
            <person name="Gambaryan S."/>
            <person name="Sickmann A."/>
        </authorList>
    </citation>
    <scope>PHOSPHORYLATION [LARGE SCALE ANALYSIS] AT SER-1196</scope>
    <scope>IDENTIFICATION BY MASS SPECTROMETRY [LARGE SCALE ANALYSIS]</scope>
    <source>
        <tissue>Platelet</tissue>
    </source>
</reference>
<reference key="17">
    <citation type="journal article" date="2008" name="Proc. Natl. Acad. Sci. U.S.A.">
        <title>A quantitative atlas of mitotic phosphorylation.</title>
        <authorList>
            <person name="Dephoure N."/>
            <person name="Zhou C."/>
            <person name="Villen J."/>
            <person name="Beausoleil S.A."/>
            <person name="Bakalarski C.E."/>
            <person name="Elledge S.J."/>
            <person name="Gygi S.P."/>
        </authorList>
    </citation>
    <scope>PHOSPHORYLATION [LARGE SCALE ANALYSIS] AT SER-600; SER-646; SER-649; THR-656; SER-688; SER-695; THR-711; SER-714; SER-1091 AND THR-1099</scope>
    <scope>IDENTIFICATION BY MASS SPECTROMETRY [LARGE SCALE ANALYSIS]</scope>
    <source>
        <tissue>Cervix carcinoma</tissue>
    </source>
</reference>
<reference key="18">
    <citation type="journal article" date="2009" name="Anal. Chem.">
        <title>Lys-N and trypsin cover complementary parts of the phosphoproteome in a refined SCX-based approach.</title>
        <authorList>
            <person name="Gauci S."/>
            <person name="Helbig A.O."/>
            <person name="Slijper M."/>
            <person name="Krijgsveld J."/>
            <person name="Heck A.J."/>
            <person name="Mohammed S."/>
        </authorList>
    </citation>
    <scope>IDENTIFICATION BY MASS SPECTROMETRY [LARGE SCALE ANALYSIS]</scope>
</reference>
<reference key="19">
    <citation type="journal article" date="2009" name="Sci. Signal.">
        <title>Quantitative phosphoproteomic analysis of T cell receptor signaling reveals system-wide modulation of protein-protein interactions.</title>
        <authorList>
            <person name="Mayya V."/>
            <person name="Lundgren D.H."/>
            <person name="Hwang S.-I."/>
            <person name="Rezaul K."/>
            <person name="Wu L."/>
            <person name="Eng J.K."/>
            <person name="Rodionov V."/>
            <person name="Han D.K."/>
        </authorList>
    </citation>
    <scope>PHOSPHORYLATION [LARGE SCALE ANALYSIS] AT SER-600; SER-646; SER-688; SER-797 AND SER-1091</scope>
    <scope>IDENTIFICATION BY MASS SPECTROMETRY [LARGE SCALE ANALYSIS]</scope>
    <source>
        <tissue>Leukemic T-cell</tissue>
    </source>
</reference>
<reference key="20">
    <citation type="journal article" date="2010" name="Sci. Signal.">
        <title>Quantitative phosphoproteomics reveals widespread full phosphorylation site occupancy during mitosis.</title>
        <authorList>
            <person name="Olsen J.V."/>
            <person name="Vermeulen M."/>
            <person name="Santamaria A."/>
            <person name="Kumar C."/>
            <person name="Miller M.L."/>
            <person name="Jensen L.J."/>
            <person name="Gnad F."/>
            <person name="Cox J."/>
            <person name="Jensen T.S."/>
            <person name="Nigg E.A."/>
            <person name="Brunak S."/>
            <person name="Mann M."/>
        </authorList>
    </citation>
    <scope>PHOSPHORYLATION [LARGE SCALE ANALYSIS] AT SER-646 AND SER-1223</scope>
    <scope>IDENTIFICATION BY MASS SPECTROMETRY [LARGE SCALE ANALYSIS]</scope>
    <source>
        <tissue>Cervix carcinoma</tissue>
    </source>
</reference>
<reference key="21">
    <citation type="journal article" date="2011" name="BMC Syst. Biol.">
        <title>Initial characterization of the human central proteome.</title>
        <authorList>
            <person name="Burkard T.R."/>
            <person name="Planyavsky M."/>
            <person name="Kaupe I."/>
            <person name="Breitwieser F.P."/>
            <person name="Buerckstuemmer T."/>
            <person name="Bennett K.L."/>
            <person name="Superti-Furga G."/>
            <person name="Colinge J."/>
        </authorList>
    </citation>
    <scope>IDENTIFICATION BY MASS SPECTROMETRY [LARGE SCALE ANALYSIS]</scope>
</reference>
<reference key="22">
    <citation type="journal article" date="2011" name="Sci. Signal.">
        <title>System-wide temporal characterization of the proteome and phosphoproteome of human embryonic stem cell differentiation.</title>
        <authorList>
            <person name="Rigbolt K.T."/>
            <person name="Prokhorova T.A."/>
            <person name="Akimov V."/>
            <person name="Henningsen J."/>
            <person name="Johansen P.T."/>
            <person name="Kratchmarova I."/>
            <person name="Kassem M."/>
            <person name="Mann M."/>
            <person name="Olsen J.V."/>
            <person name="Blagoev B."/>
        </authorList>
    </citation>
    <scope>PHOSPHORYLATION [LARGE SCALE ANALYSIS] AT SER-600; SER-646 AND SER-684</scope>
    <scope>IDENTIFICATION BY MASS SPECTROMETRY [LARGE SCALE ANALYSIS]</scope>
</reference>
<reference key="23">
    <citation type="journal article" date="2013" name="J. Proteome Res.">
        <title>Toward a comprehensive characterization of a human cancer cell phosphoproteome.</title>
        <authorList>
            <person name="Zhou H."/>
            <person name="Di Palma S."/>
            <person name="Preisinger C."/>
            <person name="Peng M."/>
            <person name="Polat A.N."/>
            <person name="Heck A.J."/>
            <person name="Mohammed S."/>
        </authorList>
    </citation>
    <scope>PHOSPHORYLATION [LARGE SCALE ANALYSIS] AT SER-246; SER-545; SER-558; SER-559; SER-568; SER-600; SER-636; SER-646; SER-647; SER-649; SER-695; SER-705; SER-787; SER-797; SER-823; SER-1091 AND SER-1196</scope>
    <scope>IDENTIFICATION BY MASS SPECTROMETRY [LARGE SCALE ANALYSIS]</scope>
    <source>
        <tissue>Cervix carcinoma</tissue>
        <tissue>Erythroleukemia</tissue>
    </source>
</reference>
<reference key="24">
    <citation type="journal article" date="2014" name="J. Proteomics">
        <title>An enzyme assisted RP-RPLC approach for in-depth analysis of human liver phosphoproteome.</title>
        <authorList>
            <person name="Bian Y."/>
            <person name="Song C."/>
            <person name="Cheng K."/>
            <person name="Dong M."/>
            <person name="Wang F."/>
            <person name="Huang J."/>
            <person name="Sun D."/>
            <person name="Wang L."/>
            <person name="Ye M."/>
            <person name="Zou H."/>
        </authorList>
    </citation>
    <scope>IDENTIFICATION BY MASS SPECTROMETRY [LARGE SCALE ANALYSIS]</scope>
    <source>
        <tissue>Liver</tissue>
    </source>
</reference>
<reference key="25">
    <citation type="journal article" date="2021" name="Chromosome Res.">
        <title>SOGA1 and SOGA2/MTCL1 are CLASP-interacting proteins required for faithful chromosome segregation in human cells.</title>
        <authorList>
            <person name="Ferreira L.T."/>
            <person name="Logarinho E."/>
            <person name="Macedo J.C."/>
            <person name="Maia A.R.R."/>
            <person name="Maiato H."/>
        </authorList>
    </citation>
    <scope>INTERACTION WITH MTCL2 AND MTCL1</scope>
</reference>
<protein>
    <recommendedName>
        <fullName>CLIP-associating protein 1</fullName>
    </recommendedName>
    <alternativeName>
        <fullName>Cytoplasmic linker-associated protein 1</fullName>
    </alternativeName>
    <alternativeName>
        <fullName>Multiple asters homolog 1</fullName>
    </alternativeName>
    <alternativeName>
        <fullName>Protein Orbit homolog 1</fullName>
        <shortName>hOrbit1</shortName>
    </alternativeName>
</protein>
<name>CLAP1_HUMAN</name>